<gene>
    <name evidence="16" type="primary">SLC25A31</name>
    <name evidence="12" type="synonym">AAC4</name>
    <name evidence="5" type="synonym">ANT4</name>
    <name evidence="13" type="synonym">SFEC</name>
</gene>
<feature type="chain" id="PRO_0000297624" description="ADP/ATP translocase 4">
    <location>
        <begin position="1"/>
        <end position="315"/>
    </location>
</feature>
<feature type="topological domain" description="Mitochondrial intermembrane" evidence="14">
    <location>
        <begin position="1"/>
        <end position="19"/>
    </location>
</feature>
<feature type="transmembrane region" description="Helical; Name=1" evidence="2">
    <location>
        <begin position="20"/>
        <end position="49"/>
    </location>
</feature>
<feature type="topological domain" description="Mitochondrial matrix" evidence="14">
    <location>
        <begin position="50"/>
        <end position="86"/>
    </location>
</feature>
<feature type="transmembrane region" description="Helical; Name=2" evidence="2">
    <location>
        <begin position="87"/>
        <end position="111"/>
    </location>
</feature>
<feature type="topological domain" description="Mitochondrial intermembrane" evidence="14">
    <location>
        <begin position="112"/>
        <end position="121"/>
    </location>
</feature>
<feature type="transmembrane region" description="Helical; Name=3" evidence="2">
    <location>
        <begin position="122"/>
        <end position="142"/>
    </location>
</feature>
<feature type="topological domain" description="Mitochondrial matrix" evidence="14">
    <location>
        <begin position="143"/>
        <end position="190"/>
    </location>
</feature>
<feature type="transmembrane region" description="Helical; Name=4" evidence="2">
    <location>
        <begin position="191"/>
        <end position="211"/>
    </location>
</feature>
<feature type="topological domain" description="Mitochondrial intermembrane" evidence="14">
    <location>
        <begin position="212"/>
        <end position="222"/>
    </location>
</feature>
<feature type="transmembrane region" description="Helical; Name=5" evidence="2">
    <location>
        <begin position="223"/>
        <end position="243"/>
    </location>
</feature>
<feature type="topological domain" description="Mitochondrial matrix" evidence="14">
    <location>
        <begin position="244"/>
        <end position="283"/>
    </location>
</feature>
<feature type="transmembrane region" description="Helical; Name=6" evidence="2">
    <location>
        <begin position="284"/>
        <end position="301"/>
    </location>
</feature>
<feature type="topological domain" description="Mitochondrial intermembrane" evidence="14">
    <location>
        <begin position="302"/>
        <end position="315"/>
    </location>
</feature>
<feature type="repeat" description="Solcar 1">
    <location>
        <begin position="18"/>
        <end position="110"/>
    </location>
</feature>
<feature type="repeat" description="Solcar 2">
    <location>
        <begin position="123"/>
        <end position="213"/>
    </location>
</feature>
<feature type="repeat" description="Solcar 3">
    <location>
        <begin position="220"/>
        <end position="307"/>
    </location>
</feature>
<feature type="region of interest" description="Important for transport activity" evidence="3">
    <location>
        <begin position="247"/>
        <end position="252"/>
    </location>
</feature>
<feature type="short sequence motif" description="Nucleotide carrier signature motif" evidence="2">
    <location>
        <begin position="247"/>
        <end position="252"/>
    </location>
</feature>
<feature type="binding site" evidence="2">
    <location>
        <position position="92"/>
    </location>
    <ligand>
        <name>ADP</name>
        <dbReference type="ChEBI" id="CHEBI:456216"/>
    </ligand>
</feature>
<feature type="binding site" evidence="2">
    <location>
        <position position="104"/>
    </location>
    <ligand>
        <name>ADP</name>
        <dbReference type="ChEBI" id="CHEBI:456216"/>
    </ligand>
</feature>
<feature type="binding site" evidence="2">
    <location>
        <position position="247"/>
    </location>
    <ligand>
        <name>ADP</name>
        <dbReference type="ChEBI" id="CHEBI:456216"/>
    </ligand>
</feature>
<feature type="sequence variant" id="VAR_074177" evidence="10">
    <original>K</original>
    <variation>E</variation>
    <location>
        <position position="303"/>
    </location>
</feature>
<keyword id="KW-0050">Antiport</keyword>
<keyword id="KW-1003">Cell membrane</keyword>
<keyword id="KW-0966">Cell projection</keyword>
<keyword id="KW-0969">Cilium</keyword>
<keyword id="KW-0221">Differentiation</keyword>
<keyword id="KW-0282">Flagellum</keyword>
<keyword id="KW-0472">Membrane</keyword>
<keyword id="KW-0496">Mitochondrion</keyword>
<keyword id="KW-0999">Mitochondrion inner membrane</keyword>
<keyword id="KW-1267">Proteomics identification</keyword>
<keyword id="KW-1185">Reference proteome</keyword>
<keyword id="KW-0677">Repeat</keyword>
<keyword id="KW-0744">Spermatogenesis</keyword>
<keyword id="KW-0812">Transmembrane</keyword>
<keyword id="KW-1133">Transmembrane helix</keyword>
<keyword id="KW-0813">Transport</keyword>
<accession>Q9H0C2</accession>
<dbReference type="EMBL" id="AJ863129">
    <property type="protein sequence ID" value="CAI05952.1"/>
    <property type="molecule type" value="mRNA"/>
</dbReference>
<dbReference type="EMBL" id="AY550240">
    <property type="protein sequence ID" value="AAT42263.1"/>
    <property type="molecule type" value="mRNA"/>
</dbReference>
<dbReference type="EMBL" id="AL136857">
    <property type="protein sequence ID" value="CAB66791.1"/>
    <property type="molecule type" value="mRNA"/>
</dbReference>
<dbReference type="EMBL" id="AC093591">
    <property type="protein sequence ID" value="AAY40974.1"/>
    <property type="molecule type" value="Genomic_DNA"/>
</dbReference>
<dbReference type="EMBL" id="CH471056">
    <property type="protein sequence ID" value="EAX05199.1"/>
    <property type="molecule type" value="Genomic_DNA"/>
</dbReference>
<dbReference type="EMBL" id="BC022032">
    <property type="protein sequence ID" value="AAH22032.1"/>
    <property type="molecule type" value="mRNA"/>
</dbReference>
<dbReference type="CCDS" id="CCDS3733.1"/>
<dbReference type="RefSeq" id="NP_001305396.1">
    <property type="nucleotide sequence ID" value="NM_001318467.1"/>
</dbReference>
<dbReference type="RefSeq" id="NP_112581.1">
    <property type="nucleotide sequence ID" value="NM_031291.4"/>
</dbReference>
<dbReference type="SMR" id="Q9H0C2"/>
<dbReference type="BioGRID" id="123649">
    <property type="interactions" value="66"/>
</dbReference>
<dbReference type="FunCoup" id="Q9H0C2">
    <property type="interactions" value="503"/>
</dbReference>
<dbReference type="IntAct" id="Q9H0C2">
    <property type="interactions" value="38"/>
</dbReference>
<dbReference type="STRING" id="9606.ENSP00000281154"/>
<dbReference type="TCDB" id="2.A.29.1.8">
    <property type="family name" value="the mitochondrial carrier (mc) family"/>
</dbReference>
<dbReference type="iPTMnet" id="Q9H0C2"/>
<dbReference type="PhosphoSitePlus" id="Q9H0C2"/>
<dbReference type="SwissPalm" id="Q9H0C2"/>
<dbReference type="BioMuta" id="SLC25A31"/>
<dbReference type="DMDM" id="74752557"/>
<dbReference type="jPOST" id="Q9H0C2"/>
<dbReference type="MassIVE" id="Q9H0C2"/>
<dbReference type="PaxDb" id="9606-ENSP00000281154"/>
<dbReference type="PeptideAtlas" id="Q9H0C2"/>
<dbReference type="ProteomicsDB" id="80251"/>
<dbReference type="Antibodypedia" id="3024">
    <property type="antibodies" value="154 antibodies from 24 providers"/>
</dbReference>
<dbReference type="DNASU" id="83447"/>
<dbReference type="Ensembl" id="ENST00000281154.6">
    <property type="protein sequence ID" value="ENSP00000281154.4"/>
    <property type="gene ID" value="ENSG00000151475.6"/>
</dbReference>
<dbReference type="GeneID" id="83447"/>
<dbReference type="KEGG" id="hsa:83447"/>
<dbReference type="MANE-Select" id="ENST00000281154.6">
    <property type="protein sequence ID" value="ENSP00000281154.4"/>
    <property type="RefSeq nucleotide sequence ID" value="NM_031291.4"/>
    <property type="RefSeq protein sequence ID" value="NP_112581.1"/>
</dbReference>
<dbReference type="UCSC" id="uc003ifl.4">
    <property type="organism name" value="human"/>
</dbReference>
<dbReference type="AGR" id="HGNC:25319"/>
<dbReference type="CTD" id="83447"/>
<dbReference type="DisGeNET" id="83447"/>
<dbReference type="GeneCards" id="SLC25A31"/>
<dbReference type="HGNC" id="HGNC:25319">
    <property type="gene designation" value="SLC25A31"/>
</dbReference>
<dbReference type="HPA" id="ENSG00000151475">
    <property type="expression patterns" value="Tissue enriched (testis)"/>
</dbReference>
<dbReference type="MIM" id="610796">
    <property type="type" value="gene"/>
</dbReference>
<dbReference type="neXtProt" id="NX_Q9H0C2"/>
<dbReference type="OpenTargets" id="ENSG00000151475"/>
<dbReference type="PharmGKB" id="PA142670904"/>
<dbReference type="VEuPathDB" id="HostDB:ENSG00000151475"/>
<dbReference type="eggNOG" id="KOG0749">
    <property type="taxonomic scope" value="Eukaryota"/>
</dbReference>
<dbReference type="GeneTree" id="ENSGT00940000160648"/>
<dbReference type="HOGENOM" id="CLU_015166_12_0_1"/>
<dbReference type="InParanoid" id="Q9H0C2"/>
<dbReference type="OMA" id="FRGIHHF"/>
<dbReference type="OrthoDB" id="270584at2759"/>
<dbReference type="PAN-GO" id="Q9H0C2">
    <property type="GO annotations" value="4 GO annotations based on evolutionary models"/>
</dbReference>
<dbReference type="PhylomeDB" id="Q9H0C2"/>
<dbReference type="TreeFam" id="TF300743"/>
<dbReference type="PathwayCommons" id="Q9H0C2"/>
<dbReference type="SignaLink" id="Q9H0C2"/>
<dbReference type="BioGRID-ORCS" id="83447">
    <property type="hits" value="21 hits in 1147 CRISPR screens"/>
</dbReference>
<dbReference type="CD-CODE" id="91857CE7">
    <property type="entry name" value="Nucleolus"/>
</dbReference>
<dbReference type="CD-CODE" id="FB4E32DD">
    <property type="entry name" value="Presynaptic clusters and postsynaptic densities"/>
</dbReference>
<dbReference type="ChiTaRS" id="SLC25A31">
    <property type="organism name" value="human"/>
</dbReference>
<dbReference type="GeneWiki" id="SLC25A31"/>
<dbReference type="GenomeRNAi" id="83447"/>
<dbReference type="Pharos" id="Q9H0C2">
    <property type="development level" value="Tbio"/>
</dbReference>
<dbReference type="PRO" id="PR:Q9H0C2"/>
<dbReference type="Proteomes" id="UP000005640">
    <property type="component" value="Chromosome 4"/>
</dbReference>
<dbReference type="RNAct" id="Q9H0C2">
    <property type="molecule type" value="protein"/>
</dbReference>
<dbReference type="Bgee" id="ENSG00000151475">
    <property type="expression patterns" value="Expressed in adult organism and 18 other cell types or tissues"/>
</dbReference>
<dbReference type="GO" id="GO:0016020">
    <property type="term" value="C:membrane"/>
    <property type="evidence" value="ECO:0000314"/>
    <property type="project" value="UniProtKB"/>
</dbReference>
<dbReference type="GO" id="GO:0005743">
    <property type="term" value="C:mitochondrial inner membrane"/>
    <property type="evidence" value="ECO:0007669"/>
    <property type="project" value="UniProtKB-SubCell"/>
</dbReference>
<dbReference type="GO" id="GO:0005757">
    <property type="term" value="C:mitochondrial permeability transition pore complex"/>
    <property type="evidence" value="ECO:0000250"/>
    <property type="project" value="UniProtKB"/>
</dbReference>
<dbReference type="GO" id="GO:0005739">
    <property type="term" value="C:mitochondrion"/>
    <property type="evidence" value="ECO:0000314"/>
    <property type="project" value="LIFEdb"/>
</dbReference>
<dbReference type="GO" id="GO:0031514">
    <property type="term" value="C:motile cilium"/>
    <property type="evidence" value="ECO:0007669"/>
    <property type="project" value="UniProtKB-KW"/>
</dbReference>
<dbReference type="GO" id="GO:0005634">
    <property type="term" value="C:nucleus"/>
    <property type="evidence" value="ECO:0007005"/>
    <property type="project" value="UniProtKB"/>
</dbReference>
<dbReference type="GO" id="GO:0005886">
    <property type="term" value="C:plasma membrane"/>
    <property type="evidence" value="ECO:0007669"/>
    <property type="project" value="UniProtKB-KW"/>
</dbReference>
<dbReference type="GO" id="GO:0005471">
    <property type="term" value="F:ATP:ADP antiporter activity"/>
    <property type="evidence" value="ECO:0007669"/>
    <property type="project" value="InterPro"/>
</dbReference>
<dbReference type="GO" id="GO:0030154">
    <property type="term" value="P:cell differentiation"/>
    <property type="evidence" value="ECO:0007669"/>
    <property type="project" value="UniProtKB-KW"/>
</dbReference>
<dbReference type="GO" id="GO:0007141">
    <property type="term" value="P:male meiosis I"/>
    <property type="evidence" value="ECO:0000250"/>
    <property type="project" value="UniProtKB"/>
</dbReference>
<dbReference type="GO" id="GO:0140021">
    <property type="term" value="P:mitochondrial ADP transmembrane transport"/>
    <property type="evidence" value="ECO:0007669"/>
    <property type="project" value="InterPro"/>
</dbReference>
<dbReference type="GO" id="GO:1990544">
    <property type="term" value="P:mitochondrial ATP transmembrane transport"/>
    <property type="evidence" value="ECO:0007669"/>
    <property type="project" value="InterPro"/>
</dbReference>
<dbReference type="GO" id="GO:1901029">
    <property type="term" value="P:negative regulation of mitochondrial outer membrane permeabilization involved in apoptotic signaling pathway"/>
    <property type="evidence" value="ECO:0000318"/>
    <property type="project" value="GO_Central"/>
</dbReference>
<dbReference type="GO" id="GO:0046902">
    <property type="term" value="P:regulation of mitochondrial membrane permeability"/>
    <property type="evidence" value="ECO:0000250"/>
    <property type="project" value="UniProtKB"/>
</dbReference>
<dbReference type="GO" id="GO:0007283">
    <property type="term" value="P:spermatogenesis"/>
    <property type="evidence" value="ECO:0000250"/>
    <property type="project" value="UniProtKB"/>
</dbReference>
<dbReference type="FunFam" id="1.50.40.10:FF:000002">
    <property type="entry name" value="Putative ADP/ATP translocase 2-like"/>
    <property type="match status" value="1"/>
</dbReference>
<dbReference type="Gene3D" id="1.50.40.10">
    <property type="entry name" value="Mitochondrial carrier domain"/>
    <property type="match status" value="1"/>
</dbReference>
<dbReference type="InterPro" id="IPR002113">
    <property type="entry name" value="ADT_euk_type"/>
</dbReference>
<dbReference type="InterPro" id="IPR002067">
    <property type="entry name" value="Mit_carrier"/>
</dbReference>
<dbReference type="InterPro" id="IPR018108">
    <property type="entry name" value="Mitochondrial_sb/sol_carrier"/>
</dbReference>
<dbReference type="InterPro" id="IPR023395">
    <property type="entry name" value="Mt_carrier_dom_sf"/>
</dbReference>
<dbReference type="PANTHER" id="PTHR45635">
    <property type="entry name" value="ADP,ATP CARRIER PROTEIN 1-RELATED-RELATED"/>
    <property type="match status" value="1"/>
</dbReference>
<dbReference type="PANTHER" id="PTHR45635:SF40">
    <property type="entry name" value="ADP_ATP TRANSLOCASE 4"/>
    <property type="match status" value="1"/>
</dbReference>
<dbReference type="Pfam" id="PF00153">
    <property type="entry name" value="Mito_carr"/>
    <property type="match status" value="3"/>
</dbReference>
<dbReference type="PRINTS" id="PR00927">
    <property type="entry name" value="ADPTRNSLCASE"/>
</dbReference>
<dbReference type="PRINTS" id="PR00926">
    <property type="entry name" value="MITOCARRIER"/>
</dbReference>
<dbReference type="SUPFAM" id="SSF103506">
    <property type="entry name" value="Mitochondrial carrier"/>
    <property type="match status" value="1"/>
</dbReference>
<dbReference type="PROSITE" id="PS50920">
    <property type="entry name" value="SOLCAR"/>
    <property type="match status" value="3"/>
</dbReference>
<evidence type="ECO:0000250" key="1">
    <source>
        <dbReference type="UniProtKB" id="G2QNH0"/>
    </source>
</evidence>
<evidence type="ECO:0000250" key="2">
    <source>
        <dbReference type="UniProtKB" id="P02722"/>
    </source>
</evidence>
<evidence type="ECO:0000250" key="3">
    <source>
        <dbReference type="UniProtKB" id="P12235"/>
    </source>
</evidence>
<evidence type="ECO:0000250" key="4">
    <source>
        <dbReference type="UniProtKB" id="P48962"/>
    </source>
</evidence>
<evidence type="ECO:0000250" key="5">
    <source>
        <dbReference type="UniProtKB" id="Q3V132"/>
    </source>
</evidence>
<evidence type="ECO:0000255" key="6"/>
<evidence type="ECO:0000269" key="7">
    <source>
    </source>
</evidence>
<evidence type="ECO:0000269" key="8">
    <source>
    </source>
</evidence>
<evidence type="ECO:0000269" key="9">
    <source>
    </source>
</evidence>
<evidence type="ECO:0000269" key="10">
    <source>
    </source>
</evidence>
<evidence type="ECO:0000269" key="11">
    <source>
    </source>
</evidence>
<evidence type="ECO:0000303" key="12">
    <source>
    </source>
</evidence>
<evidence type="ECO:0000303" key="13">
    <source>
    </source>
</evidence>
<evidence type="ECO:0000305" key="14"/>
<evidence type="ECO:0000305" key="15">
    <source>
    </source>
</evidence>
<evidence type="ECO:0000312" key="16">
    <source>
        <dbReference type="HGNC" id="HGNC:25319"/>
    </source>
</evidence>
<name>ADT4_HUMAN</name>
<protein>
    <recommendedName>
        <fullName evidence="14">ADP/ATP translocase 4</fullName>
    </recommendedName>
    <alternativeName>
        <fullName evidence="12">ADP,ATP carrier protein 4</fullName>
    </alternativeName>
    <alternativeName>
        <fullName evidence="5">Adenine nucleotide translocator 4</fullName>
        <shortName evidence="5">ANT 4</shortName>
    </alternativeName>
    <alternativeName>
        <fullName evidence="14">Solute carrier family 25 member 31</fullName>
    </alternativeName>
    <alternativeName>
        <fullName evidence="13">Sperm flagellar energy carrier protein</fullName>
    </alternativeName>
</protein>
<proteinExistence type="evidence at protein level"/>
<reference key="1">
    <citation type="journal article" date="2005" name="FEBS Lett.">
        <title>A fourth ADP/ATP carrier isoform in man: identification, bacterial expression, functional characterization and tissue distribution.</title>
        <authorList>
            <person name="Dolce V."/>
            <person name="Scarcia P."/>
            <person name="Iacopetta D."/>
            <person name="Palmieri F."/>
        </authorList>
    </citation>
    <scope>NUCLEOTIDE SEQUENCE [MRNA]</scope>
    <scope>FUNCTION</scope>
    <scope>TRANSPORT ACTIVITY</scope>
    <scope>BIOPHYSICOCHEMICAL PROPERTIES</scope>
    <scope>SUBCELLULAR LOCATION</scope>
    <scope>TISSUE SPECIFICITY</scope>
    <source>
        <tissue>Liver</tissue>
    </source>
</reference>
<reference key="2">
    <citation type="journal article" date="2007" name="Dev. Biol.">
        <title>Compartmentalization of a unique ADP/ATP carrier protein SFEC (sperm flagellar energy carrier, AAC4) with glycolytic enzymes in the fibrous sheath of the human sperm flagellar principal piece.</title>
        <authorList>
            <person name="Kim Y.-H."/>
            <person name="Haidl G."/>
            <person name="Schaefer M."/>
            <person name="Egner U."/>
            <person name="Mandal A."/>
            <person name="Herr J.C."/>
        </authorList>
    </citation>
    <scope>NUCLEOTIDE SEQUENCE [MRNA]</scope>
    <scope>FUNCTION</scope>
    <scope>SUBCELLULAR LOCATION</scope>
    <scope>TISSUE SPECIFICITY</scope>
</reference>
<reference key="3">
    <citation type="journal article" date="2001" name="Genome Res.">
        <title>Towards a catalog of human genes and proteins: sequencing and analysis of 500 novel complete protein coding human cDNAs.</title>
        <authorList>
            <person name="Wiemann S."/>
            <person name="Weil B."/>
            <person name="Wellenreuther R."/>
            <person name="Gassenhuber J."/>
            <person name="Glassl S."/>
            <person name="Ansorge W."/>
            <person name="Boecher M."/>
            <person name="Bloecker H."/>
            <person name="Bauersachs S."/>
            <person name="Blum H."/>
            <person name="Lauber J."/>
            <person name="Duesterhoeft A."/>
            <person name="Beyer A."/>
            <person name="Koehrer K."/>
            <person name="Strack N."/>
            <person name="Mewes H.-W."/>
            <person name="Ottenwaelder B."/>
            <person name="Obermaier B."/>
            <person name="Tampe J."/>
            <person name="Heubner D."/>
            <person name="Wambutt R."/>
            <person name="Korn B."/>
            <person name="Klein M."/>
            <person name="Poustka A."/>
        </authorList>
    </citation>
    <scope>NUCLEOTIDE SEQUENCE [LARGE SCALE MRNA]</scope>
    <source>
        <tissue>Testis</tissue>
    </source>
</reference>
<reference key="4">
    <citation type="journal article" date="2005" name="Nature">
        <title>Generation and annotation of the DNA sequences of human chromosomes 2 and 4.</title>
        <authorList>
            <person name="Hillier L.W."/>
            <person name="Graves T.A."/>
            <person name="Fulton R.S."/>
            <person name="Fulton L.A."/>
            <person name="Pepin K.H."/>
            <person name="Minx P."/>
            <person name="Wagner-McPherson C."/>
            <person name="Layman D."/>
            <person name="Wylie K."/>
            <person name="Sekhon M."/>
            <person name="Becker M.C."/>
            <person name="Fewell G.A."/>
            <person name="Delehaunty K.D."/>
            <person name="Miner T.L."/>
            <person name="Nash W.E."/>
            <person name="Kremitzki C."/>
            <person name="Oddy L."/>
            <person name="Du H."/>
            <person name="Sun H."/>
            <person name="Bradshaw-Cordum H."/>
            <person name="Ali J."/>
            <person name="Carter J."/>
            <person name="Cordes M."/>
            <person name="Harris A."/>
            <person name="Isak A."/>
            <person name="van Brunt A."/>
            <person name="Nguyen C."/>
            <person name="Du F."/>
            <person name="Courtney L."/>
            <person name="Kalicki J."/>
            <person name="Ozersky P."/>
            <person name="Abbott S."/>
            <person name="Armstrong J."/>
            <person name="Belter E.A."/>
            <person name="Caruso L."/>
            <person name="Cedroni M."/>
            <person name="Cotton M."/>
            <person name="Davidson T."/>
            <person name="Desai A."/>
            <person name="Elliott G."/>
            <person name="Erb T."/>
            <person name="Fronick C."/>
            <person name="Gaige T."/>
            <person name="Haakenson W."/>
            <person name="Haglund K."/>
            <person name="Holmes A."/>
            <person name="Harkins R."/>
            <person name="Kim K."/>
            <person name="Kruchowski S.S."/>
            <person name="Strong C.M."/>
            <person name="Grewal N."/>
            <person name="Goyea E."/>
            <person name="Hou S."/>
            <person name="Levy A."/>
            <person name="Martinka S."/>
            <person name="Mead K."/>
            <person name="McLellan M.D."/>
            <person name="Meyer R."/>
            <person name="Randall-Maher J."/>
            <person name="Tomlinson C."/>
            <person name="Dauphin-Kohlberg S."/>
            <person name="Kozlowicz-Reilly A."/>
            <person name="Shah N."/>
            <person name="Swearengen-Shahid S."/>
            <person name="Snider J."/>
            <person name="Strong J.T."/>
            <person name="Thompson J."/>
            <person name="Yoakum M."/>
            <person name="Leonard S."/>
            <person name="Pearman C."/>
            <person name="Trani L."/>
            <person name="Radionenko M."/>
            <person name="Waligorski J.E."/>
            <person name="Wang C."/>
            <person name="Rock S.M."/>
            <person name="Tin-Wollam A.-M."/>
            <person name="Maupin R."/>
            <person name="Latreille P."/>
            <person name="Wendl M.C."/>
            <person name="Yang S.-P."/>
            <person name="Pohl C."/>
            <person name="Wallis J.W."/>
            <person name="Spieth J."/>
            <person name="Bieri T.A."/>
            <person name="Berkowicz N."/>
            <person name="Nelson J.O."/>
            <person name="Osborne J."/>
            <person name="Ding L."/>
            <person name="Meyer R."/>
            <person name="Sabo A."/>
            <person name="Shotland Y."/>
            <person name="Sinha P."/>
            <person name="Wohldmann P.E."/>
            <person name="Cook L.L."/>
            <person name="Hickenbotham M.T."/>
            <person name="Eldred J."/>
            <person name="Williams D."/>
            <person name="Jones T.A."/>
            <person name="She X."/>
            <person name="Ciccarelli F.D."/>
            <person name="Izaurralde E."/>
            <person name="Taylor J."/>
            <person name="Schmutz J."/>
            <person name="Myers R.M."/>
            <person name="Cox D.R."/>
            <person name="Huang X."/>
            <person name="McPherson J.D."/>
            <person name="Mardis E.R."/>
            <person name="Clifton S.W."/>
            <person name="Warren W.C."/>
            <person name="Chinwalla A.T."/>
            <person name="Eddy S.R."/>
            <person name="Marra M.A."/>
            <person name="Ovcharenko I."/>
            <person name="Furey T.S."/>
            <person name="Miller W."/>
            <person name="Eichler E.E."/>
            <person name="Bork P."/>
            <person name="Suyama M."/>
            <person name="Torrents D."/>
            <person name="Waterston R.H."/>
            <person name="Wilson R.K."/>
        </authorList>
    </citation>
    <scope>NUCLEOTIDE SEQUENCE [LARGE SCALE GENOMIC DNA]</scope>
</reference>
<reference key="5">
    <citation type="submission" date="2005-09" db="EMBL/GenBank/DDBJ databases">
        <authorList>
            <person name="Mural R.J."/>
            <person name="Istrail S."/>
            <person name="Sutton G.G."/>
            <person name="Florea L."/>
            <person name="Halpern A.L."/>
            <person name="Mobarry C.M."/>
            <person name="Lippert R."/>
            <person name="Walenz B."/>
            <person name="Shatkay H."/>
            <person name="Dew I."/>
            <person name="Miller J.R."/>
            <person name="Flanigan M.J."/>
            <person name="Edwards N.J."/>
            <person name="Bolanos R."/>
            <person name="Fasulo D."/>
            <person name="Halldorsson B.V."/>
            <person name="Hannenhalli S."/>
            <person name="Turner R."/>
            <person name="Yooseph S."/>
            <person name="Lu F."/>
            <person name="Nusskern D.R."/>
            <person name="Shue B.C."/>
            <person name="Zheng X.H."/>
            <person name="Zhong F."/>
            <person name="Delcher A.L."/>
            <person name="Huson D.H."/>
            <person name="Kravitz S.A."/>
            <person name="Mouchard L."/>
            <person name="Reinert K."/>
            <person name="Remington K.A."/>
            <person name="Clark A.G."/>
            <person name="Waterman M.S."/>
            <person name="Eichler E.E."/>
            <person name="Adams M.D."/>
            <person name="Hunkapiller M.W."/>
            <person name="Myers E.W."/>
            <person name="Venter J.C."/>
        </authorList>
    </citation>
    <scope>NUCLEOTIDE SEQUENCE [LARGE SCALE GENOMIC DNA]</scope>
</reference>
<reference key="6">
    <citation type="journal article" date="2004" name="Genome Res.">
        <title>The status, quality, and expansion of the NIH full-length cDNA project: the Mammalian Gene Collection (MGC).</title>
        <authorList>
            <consortium name="The MGC Project Team"/>
        </authorList>
    </citation>
    <scope>NUCLEOTIDE SEQUENCE [LARGE SCALE MRNA]</scope>
    <source>
        <tissue>Testis</tissue>
    </source>
</reference>
<reference key="7">
    <citation type="journal article" date="2007" name="J. Biol. Chem.">
        <title>Evolutionarily conserved mammalian adenine nucleotide translocase 4 is essential for spermatogenesis.</title>
        <authorList>
            <person name="Brower J.V."/>
            <person name="Rodic N."/>
            <person name="Seki T."/>
            <person name="Jorgensen M."/>
            <person name="Fliess N."/>
            <person name="Yachnis A.T."/>
            <person name="McCarrey J.R."/>
            <person name="Oh S.P."/>
            <person name="Terada N."/>
        </authorList>
    </citation>
    <scope>TISSUE SPECIFICITY</scope>
</reference>
<reference key="8">
    <citation type="journal article" date="2016" name="Sci. Rep.">
        <title>TSPO ligands stimulate ZnPPIX transport and ROS accumulation leading to the inhibition of P. falciparum growth in human blood.</title>
        <authorList>
            <person name="Marginedas-Freixa I."/>
            <person name="Hattab C."/>
            <person name="Bouyer G."/>
            <person name="Halle F."/>
            <person name="Chene A."/>
            <person name="Lefevre S.D."/>
            <person name="Cambot M."/>
            <person name="Cueff A."/>
            <person name="Schmitt M."/>
            <person name="Gamain B."/>
            <person name="Lacapere J.J."/>
            <person name="Egee S."/>
            <person name="Bihel F."/>
            <person name="Le Van Kim C."/>
            <person name="Ostuni M.A."/>
        </authorList>
    </citation>
    <scope>TISSUE SPECIFICITY</scope>
    <scope>IDENTIFICATION BY MASS SPECTROMETRY</scope>
</reference>
<reference key="9">
    <citation type="journal article" date="2015" name="Proc. Natl. Acad. Sci. U.S.A.">
        <title>Neomorphic effects of recurrent somatic mutations in Yin Yang 1 in insulin-producing adenomas.</title>
        <authorList>
            <person name="Cromer M.K."/>
            <person name="Choi M."/>
            <person name="Nelson-Williams C."/>
            <person name="Fonseca A.L."/>
            <person name="Kunstman J.W."/>
            <person name="Korah R.M."/>
            <person name="Overton J.D."/>
            <person name="Mane S."/>
            <person name="Kenney B."/>
            <person name="Malchoff C.D."/>
            <person name="Stalberg P."/>
            <person name="Akerstroem G."/>
            <person name="Westin G."/>
            <person name="Hellman P."/>
            <person name="Carling T."/>
            <person name="Bjoerklund P."/>
            <person name="Lifton R.P."/>
        </authorList>
    </citation>
    <scope>VARIANT GLU-303</scope>
</reference>
<organism>
    <name type="scientific">Homo sapiens</name>
    <name type="common">Human</name>
    <dbReference type="NCBI Taxonomy" id="9606"/>
    <lineage>
        <taxon>Eukaryota</taxon>
        <taxon>Metazoa</taxon>
        <taxon>Chordata</taxon>
        <taxon>Craniata</taxon>
        <taxon>Vertebrata</taxon>
        <taxon>Euteleostomi</taxon>
        <taxon>Mammalia</taxon>
        <taxon>Eutheria</taxon>
        <taxon>Euarchontoglires</taxon>
        <taxon>Primates</taxon>
        <taxon>Haplorrhini</taxon>
        <taxon>Catarrhini</taxon>
        <taxon>Hominidae</taxon>
        <taxon>Homo</taxon>
    </lineage>
</organism>
<comment type="function">
    <text evidence="1 4 5 7 8">ADP:ATP antiporter that mediates import of ADP into the mitochondrial matrix for ATP synthesis, and export of ATP out to fuel the cell (By similarity) (PubMed:15670820). Cycles between the cytoplasmic-open state (c-state) and the matrix-open state (m-state): operates by the alternating access mechanism with a single substrate-binding site intermittently exposed to either the cytosolic (c-state) or matrix (m-state) side of the inner mitochondrial membrane (By similarity). Specifically required during spermatogenesis, probably to mediate ADP:ATP exchange in spermatocytes (PubMed:17137571). Large ATP supplies from mitochondria may be critical for normal progression of spermatogenesis during early stages of meiotic prophase I, including DNA double-strand break repair and chromosomal synapsis (By similarity). In addition to its ADP:ATP antiporter activity, also involved in mitochondrial uncoupling and mitochondrial permeability transition pore (mPTP) activity (By similarity). Plays a role in mitochondrial uncoupling by acting as a proton transporter: proton transport uncouples the proton flows via the electron transport chain and ATP synthase to reduce the efficiency of ATP production and cause mitochondrial thermogenesis (By similarity). Proton transporter activity is inhibited by ADP:ATP antiporter activity, suggesting that SLC25A31/ANT4 acts as a master regulator of mitochondrial energy output by maintaining a delicate balance between ATP production (ADP:ATP antiporter activity) and thermogenesis (proton transporter activity) (By similarity). Proton transporter activity requires free fatty acids as cofactor, but does not transport it (By similarity). Among nucleotides, may also exchange ADP for dATP and dADP (PubMed:15670820). Also plays a key role in mPTP opening, a non-specific pore that enables free passage of the mitochondrial membranes to solutes of up to 1.5 kDa, and which contributes to cell death (By similarity). It is however unclear if SLC25A31/ANT4 constitutes a pore-forming component of mPTP or regulates it (By similarity).</text>
</comment>
<comment type="catalytic activity">
    <reaction evidence="7">
        <text>ADP(in) + ATP(out) = ADP(out) + ATP(in)</text>
        <dbReference type="Rhea" id="RHEA:34999"/>
        <dbReference type="ChEBI" id="CHEBI:30616"/>
        <dbReference type="ChEBI" id="CHEBI:456216"/>
    </reaction>
    <physiologicalReaction direction="left-to-right" evidence="15">
        <dbReference type="Rhea" id="RHEA:35000"/>
    </physiologicalReaction>
    <physiologicalReaction direction="right-to-left" evidence="15">
        <dbReference type="Rhea" id="RHEA:35001"/>
    </physiologicalReaction>
</comment>
<comment type="catalytic activity">
    <reaction evidence="7">
        <text>dATP(out) + ADP(in) = dATP(in) + ADP(out)</text>
        <dbReference type="Rhea" id="RHEA:73699"/>
        <dbReference type="ChEBI" id="CHEBI:61404"/>
        <dbReference type="ChEBI" id="CHEBI:456216"/>
    </reaction>
    <physiologicalReaction direction="left-to-right" evidence="15">
        <dbReference type="Rhea" id="RHEA:73700"/>
    </physiologicalReaction>
    <physiologicalReaction direction="right-to-left" evidence="15">
        <dbReference type="Rhea" id="RHEA:73701"/>
    </physiologicalReaction>
</comment>
<comment type="catalytic activity">
    <reaction evidence="7">
        <text>dADP(in) + ADP(out) = dADP(out) + ADP(in)</text>
        <dbReference type="Rhea" id="RHEA:72855"/>
        <dbReference type="ChEBI" id="CHEBI:57667"/>
        <dbReference type="ChEBI" id="CHEBI:456216"/>
    </reaction>
    <physiologicalReaction direction="left-to-right" evidence="15">
        <dbReference type="Rhea" id="RHEA:72856"/>
    </physiologicalReaction>
    <physiologicalReaction direction="right-to-left" evidence="15">
        <dbReference type="Rhea" id="RHEA:72857"/>
    </physiologicalReaction>
</comment>
<comment type="catalytic activity">
    <reaction evidence="4">
        <text>H(+)(in) = H(+)(out)</text>
        <dbReference type="Rhea" id="RHEA:34979"/>
        <dbReference type="ChEBI" id="CHEBI:15378"/>
    </reaction>
</comment>
<comment type="activity regulation">
    <text evidence="1 4">The matrix-open state (m-state) is inhibited by the membrane-permeable bongkrekic acid (BKA). The cytoplasmic-open state (c-state) is inhibited by the membrane-impermeable toxic inhibitor carboxyatractyloside (CATR) (By similarity). Proton transporter activity is inhibited by ADP:ATP antiporter activity (By similarity).</text>
</comment>
<comment type="biophysicochemical properties">
    <kinetics>
        <KM evidence="7">72 uM for ADP</KM>
        <KM evidence="7">120 uM for ATP</KM>
        <Vmax evidence="7">1.3 mmol/min/g enzyme for ATP:ADP exchange</Vmax>
    </kinetics>
</comment>
<comment type="subunit">
    <text evidence="1 2">Monomer.</text>
</comment>
<comment type="interaction">
    <interactant intactId="EBI-6149672">
        <id>Q9H0C2</id>
    </interactant>
    <interactant intactId="EBI-10171774">
        <id>P60410</id>
        <label>KRTAP10-8</label>
    </interactant>
    <organismsDiffer>false</organismsDiffer>
    <experiments>3</experiments>
</comment>
<comment type="interaction">
    <interactant intactId="EBI-6149672">
        <id>Q9H0C2</id>
    </interactant>
    <interactant intactId="EBI-16439278">
        <id>Q6FHY5</id>
        <label>MEOX2</label>
    </interactant>
    <organismsDiffer>false</organismsDiffer>
    <experiments>3</experiments>
</comment>
<comment type="subcellular location">
    <subcellularLocation>
        <location evidence="7">Mitochondrion inner membrane</location>
        <topology evidence="6">Multi-pass membrane protein</topology>
    </subcellularLocation>
    <subcellularLocation>
        <location evidence="11">Membrane</location>
        <topology evidence="6">Multi-pass membrane protein</topology>
    </subcellularLocation>
    <subcellularLocation>
        <location evidence="8">Cell projection</location>
        <location evidence="8">Cilium</location>
        <location evidence="8">Flagellum membrane</location>
        <topology evidence="6">Multi-pass membrane protein</topology>
    </subcellularLocation>
    <text evidence="8 11">In sperm flagellum this protein is located in the fibrous sheath, a non-mitochondrial region (PubMed:17137571). May localize to non-mitochondrial membranes (PubMed:27641616).</text>
</comment>
<comment type="tissue specificity">
    <text evidence="7 8 9 11">Expressed in brain, liver, sperm and testis (PubMed:15670820, PubMed:17137571). In testis, expressed at higher level in spermatocytes, while it is expressed at lower level in spermatogonial cells (PubMed:17681941). Expressed in erythrocytes (at protein level) (PubMed:27641616).</text>
</comment>
<comment type="domain">
    <text evidence="2">The transmembrane helices are not perpendicular to the plane of the membrane, but cross the membrane at an angle. Odd-numbered transmembrane helices exhibit a sharp kink, due to the presence of a conserved proline residue.</text>
</comment>
<comment type="similarity">
    <text evidence="14">Belongs to the mitochondrial carrier (TC 2.A.29) family.</text>
</comment>
<sequence>MHREPAKKKAEKRLFDASSFGKDLLAGGVAAAVSKTAVAPIERVKLLLQVQASSKQISPEARYKGMVDCLVRIPREQGFFSFWRGNLANVIRYFPTQALNFAFKDKYKQLFMSGVNKEKQFWRWFLANLASGGAAGATSLCVVYPLDFARTRLGVDIGKGPEERQFKGLGDCIMKIAKSDGIAGLYQGFGVSVQGIIVYRASYFGAYDTVKGLLPKPKKTPFLVSFFIAQVVTTCSGILSYPFDTVRRRMMMQSGEAKRQYKGTLDCFVKIYQHEGISSFFRGAFSNVLRGTGGALVLVLYDKIKEFFHIDIGGR</sequence>